<reference key="1">
    <citation type="journal article" date="2004" name="Gene">
        <title>ZEC, a zinc finger protein with novel binding specificity and transcription regulatory activity.</title>
        <authorList>
            <person name="Chen G.-Y."/>
            <person name="Muramatsu H."/>
            <person name="Ichihara-Tanaka K."/>
            <person name="Muramatsu T."/>
        </authorList>
    </citation>
    <scope>NUCLEOTIDE SEQUENCE [MRNA] (ISOFORM 1)</scope>
    <scope>FUNCTION</scope>
    <scope>SUBCELLULAR LOCATION</scope>
    <scope>TISSUE SPECIFICITY</scope>
    <scope>DEVELOPMENTAL STAGE</scope>
    <source>
        <strain>ICR</strain>
        <tissue>Brain</tissue>
    </source>
</reference>
<reference key="2">
    <citation type="journal article" date="2005" name="Science">
        <title>The transcriptional landscape of the mammalian genome.</title>
        <authorList>
            <person name="Carninci P."/>
            <person name="Kasukawa T."/>
            <person name="Katayama S."/>
            <person name="Gough J."/>
            <person name="Frith M.C."/>
            <person name="Maeda N."/>
            <person name="Oyama R."/>
            <person name="Ravasi T."/>
            <person name="Lenhard B."/>
            <person name="Wells C."/>
            <person name="Kodzius R."/>
            <person name="Shimokawa K."/>
            <person name="Bajic V.B."/>
            <person name="Brenner S.E."/>
            <person name="Batalov S."/>
            <person name="Forrest A.R."/>
            <person name="Zavolan M."/>
            <person name="Davis M.J."/>
            <person name="Wilming L.G."/>
            <person name="Aidinis V."/>
            <person name="Allen J.E."/>
            <person name="Ambesi-Impiombato A."/>
            <person name="Apweiler R."/>
            <person name="Aturaliya R.N."/>
            <person name="Bailey T.L."/>
            <person name="Bansal M."/>
            <person name="Baxter L."/>
            <person name="Beisel K.W."/>
            <person name="Bersano T."/>
            <person name="Bono H."/>
            <person name="Chalk A.M."/>
            <person name="Chiu K.P."/>
            <person name="Choudhary V."/>
            <person name="Christoffels A."/>
            <person name="Clutterbuck D.R."/>
            <person name="Crowe M.L."/>
            <person name="Dalla E."/>
            <person name="Dalrymple B.P."/>
            <person name="de Bono B."/>
            <person name="Della Gatta G."/>
            <person name="di Bernardo D."/>
            <person name="Down T."/>
            <person name="Engstrom P."/>
            <person name="Fagiolini M."/>
            <person name="Faulkner G."/>
            <person name="Fletcher C.F."/>
            <person name="Fukushima T."/>
            <person name="Furuno M."/>
            <person name="Futaki S."/>
            <person name="Gariboldi M."/>
            <person name="Georgii-Hemming P."/>
            <person name="Gingeras T.R."/>
            <person name="Gojobori T."/>
            <person name="Green R.E."/>
            <person name="Gustincich S."/>
            <person name="Harbers M."/>
            <person name="Hayashi Y."/>
            <person name="Hensch T.K."/>
            <person name="Hirokawa N."/>
            <person name="Hill D."/>
            <person name="Huminiecki L."/>
            <person name="Iacono M."/>
            <person name="Ikeo K."/>
            <person name="Iwama A."/>
            <person name="Ishikawa T."/>
            <person name="Jakt M."/>
            <person name="Kanapin A."/>
            <person name="Katoh M."/>
            <person name="Kawasawa Y."/>
            <person name="Kelso J."/>
            <person name="Kitamura H."/>
            <person name="Kitano H."/>
            <person name="Kollias G."/>
            <person name="Krishnan S.P."/>
            <person name="Kruger A."/>
            <person name="Kummerfeld S.K."/>
            <person name="Kurochkin I.V."/>
            <person name="Lareau L.F."/>
            <person name="Lazarevic D."/>
            <person name="Lipovich L."/>
            <person name="Liu J."/>
            <person name="Liuni S."/>
            <person name="McWilliam S."/>
            <person name="Madan Babu M."/>
            <person name="Madera M."/>
            <person name="Marchionni L."/>
            <person name="Matsuda H."/>
            <person name="Matsuzawa S."/>
            <person name="Miki H."/>
            <person name="Mignone F."/>
            <person name="Miyake S."/>
            <person name="Morris K."/>
            <person name="Mottagui-Tabar S."/>
            <person name="Mulder N."/>
            <person name="Nakano N."/>
            <person name="Nakauchi H."/>
            <person name="Ng P."/>
            <person name="Nilsson R."/>
            <person name="Nishiguchi S."/>
            <person name="Nishikawa S."/>
            <person name="Nori F."/>
            <person name="Ohara O."/>
            <person name="Okazaki Y."/>
            <person name="Orlando V."/>
            <person name="Pang K.C."/>
            <person name="Pavan W.J."/>
            <person name="Pavesi G."/>
            <person name="Pesole G."/>
            <person name="Petrovsky N."/>
            <person name="Piazza S."/>
            <person name="Reed J."/>
            <person name="Reid J.F."/>
            <person name="Ring B.Z."/>
            <person name="Ringwald M."/>
            <person name="Rost B."/>
            <person name="Ruan Y."/>
            <person name="Salzberg S.L."/>
            <person name="Sandelin A."/>
            <person name="Schneider C."/>
            <person name="Schoenbach C."/>
            <person name="Sekiguchi K."/>
            <person name="Semple C.A."/>
            <person name="Seno S."/>
            <person name="Sessa L."/>
            <person name="Sheng Y."/>
            <person name="Shibata Y."/>
            <person name="Shimada H."/>
            <person name="Shimada K."/>
            <person name="Silva D."/>
            <person name="Sinclair B."/>
            <person name="Sperling S."/>
            <person name="Stupka E."/>
            <person name="Sugiura K."/>
            <person name="Sultana R."/>
            <person name="Takenaka Y."/>
            <person name="Taki K."/>
            <person name="Tammoja K."/>
            <person name="Tan S.L."/>
            <person name="Tang S."/>
            <person name="Taylor M.S."/>
            <person name="Tegner J."/>
            <person name="Teichmann S.A."/>
            <person name="Ueda H.R."/>
            <person name="van Nimwegen E."/>
            <person name="Verardo R."/>
            <person name="Wei C.L."/>
            <person name="Yagi K."/>
            <person name="Yamanishi H."/>
            <person name="Zabarovsky E."/>
            <person name="Zhu S."/>
            <person name="Zimmer A."/>
            <person name="Hide W."/>
            <person name="Bult C."/>
            <person name="Grimmond S.M."/>
            <person name="Teasdale R.D."/>
            <person name="Liu E.T."/>
            <person name="Brusic V."/>
            <person name="Quackenbush J."/>
            <person name="Wahlestedt C."/>
            <person name="Mattick J.S."/>
            <person name="Hume D.A."/>
            <person name="Kai C."/>
            <person name="Sasaki D."/>
            <person name="Tomaru Y."/>
            <person name="Fukuda S."/>
            <person name="Kanamori-Katayama M."/>
            <person name="Suzuki M."/>
            <person name="Aoki J."/>
            <person name="Arakawa T."/>
            <person name="Iida J."/>
            <person name="Imamura K."/>
            <person name="Itoh M."/>
            <person name="Kato T."/>
            <person name="Kawaji H."/>
            <person name="Kawagashira N."/>
            <person name="Kawashima T."/>
            <person name="Kojima M."/>
            <person name="Kondo S."/>
            <person name="Konno H."/>
            <person name="Nakano K."/>
            <person name="Ninomiya N."/>
            <person name="Nishio T."/>
            <person name="Okada M."/>
            <person name="Plessy C."/>
            <person name="Shibata K."/>
            <person name="Shiraki T."/>
            <person name="Suzuki S."/>
            <person name="Tagami M."/>
            <person name="Waki K."/>
            <person name="Watahiki A."/>
            <person name="Okamura-Oho Y."/>
            <person name="Suzuki H."/>
            <person name="Kawai J."/>
            <person name="Hayashizaki Y."/>
        </authorList>
    </citation>
    <scope>NUCLEOTIDE SEQUENCE [LARGE SCALE MRNA] (ISOFORM 1)</scope>
    <source>
        <strain>NOD</strain>
        <tissue>Dendritic cell</tissue>
    </source>
</reference>
<reference key="3">
    <citation type="journal article" date="2004" name="Genome Res.">
        <title>The status, quality, and expansion of the NIH full-length cDNA project: the Mammalian Gene Collection (MGC).</title>
        <authorList>
            <consortium name="The MGC Project Team"/>
        </authorList>
    </citation>
    <scope>NUCLEOTIDE SEQUENCE [LARGE SCALE MRNA] (ISOFORM 2)</scope>
    <source>
        <strain>C57BL/6J</strain>
        <tissue>Brain</tissue>
    </source>
</reference>
<reference key="4">
    <citation type="journal article" date="2020" name="Mol. Cell. Biol.">
        <title>ZFP628 Is a TAF4b-Interacting Transcription Factor Required for Mouse Spermiogenesis.</title>
        <authorList>
            <person name="Gustafson E.A."/>
            <person name="Seymour K.A."/>
            <person name="Sigrist K."/>
            <person name="Rooij D.G.D.E."/>
            <person name="Freiman R.N."/>
        </authorList>
    </citation>
    <scope>FUNCTION</scope>
    <scope>INTERACTION WITH TAF4B</scope>
    <scope>TISSUE SPECIFICITY</scope>
    <scope>DEVELOPMENTAL STAGE</scope>
    <scope>DISRUPTION PHENOTYPE</scope>
</reference>
<accession>Q8CJ78</accession>
<accession>Q3U2L5</accession>
<accession>Q6P5B3</accession>
<protein>
    <recommendedName>
        <fullName evidence="9">Zinc finger protein 628</fullName>
    </recommendedName>
    <alternativeName>
        <fullName evidence="7">Zinc finger protein expressed in embryonal cells and certain adult organs</fullName>
    </alternativeName>
</protein>
<keyword id="KW-0025">Alternative splicing</keyword>
<keyword id="KW-0238">DNA-binding</keyword>
<keyword id="KW-0479">Metal-binding</keyword>
<keyword id="KW-0539">Nucleus</keyword>
<keyword id="KW-0597">Phosphoprotein</keyword>
<keyword id="KW-1185">Reference proteome</keyword>
<keyword id="KW-0677">Repeat</keyword>
<keyword id="KW-0804">Transcription</keyword>
<keyword id="KW-0805">Transcription regulation</keyword>
<keyword id="KW-0862">Zinc</keyword>
<keyword id="KW-0863">Zinc-finger</keyword>
<dbReference type="EMBL" id="AF435832">
    <property type="protein sequence ID" value="AAN63612.1"/>
    <property type="status" value="ALT_INIT"/>
    <property type="molecule type" value="mRNA"/>
</dbReference>
<dbReference type="EMBL" id="AK155214">
    <property type="protein sequence ID" value="BAE33125.1"/>
    <property type="molecule type" value="mRNA"/>
</dbReference>
<dbReference type="EMBL" id="BC056945">
    <property type="protein sequence ID" value="AAH56945.1"/>
    <property type="status" value="ALT_INIT"/>
    <property type="molecule type" value="mRNA"/>
</dbReference>
<dbReference type="EMBL" id="BC062973">
    <property type="protein sequence ID" value="AAH62973.1"/>
    <property type="status" value="ALT_INIT"/>
    <property type="molecule type" value="mRNA"/>
</dbReference>
<dbReference type="CCDS" id="CCDS51979.1">
    <molecule id="Q8CJ78-1"/>
</dbReference>
<dbReference type="RefSeq" id="NP_739565.2">
    <molecule id="Q8CJ78-1"/>
    <property type="nucleotide sequence ID" value="NM_170759.2"/>
</dbReference>
<dbReference type="RefSeq" id="XP_006539842.1">
    <property type="nucleotide sequence ID" value="XM_006539779.3"/>
</dbReference>
<dbReference type="RefSeq" id="XP_006539843.1">
    <property type="nucleotide sequence ID" value="XM_006539780.3"/>
</dbReference>
<dbReference type="SMR" id="Q8CJ78"/>
<dbReference type="BioGRID" id="231301">
    <property type="interactions" value="1"/>
</dbReference>
<dbReference type="FunCoup" id="Q8CJ78">
    <property type="interactions" value="1079"/>
</dbReference>
<dbReference type="STRING" id="10090.ENSMUSP00000112058"/>
<dbReference type="GlyGen" id="Q8CJ78">
    <property type="glycosylation" value="6 sites"/>
</dbReference>
<dbReference type="PhosphoSitePlus" id="Q8CJ78"/>
<dbReference type="PaxDb" id="10090-ENSMUSP00000112058"/>
<dbReference type="PeptideAtlas" id="Q8CJ78"/>
<dbReference type="ProteomicsDB" id="275019">
    <molecule id="Q8CJ78-1"/>
</dbReference>
<dbReference type="ProteomicsDB" id="275020">
    <molecule id="Q8CJ78-2"/>
</dbReference>
<dbReference type="Antibodypedia" id="50986">
    <property type="antibodies" value="19 antibodies from 9 providers"/>
</dbReference>
<dbReference type="DNASU" id="232816"/>
<dbReference type="Ensembl" id="ENSMUST00000116354.4">
    <molecule id="Q8CJ78-1"/>
    <property type="protein sequence ID" value="ENSMUSP00000112058.3"/>
    <property type="gene ID" value="ENSMUSG00000074406.6"/>
</dbReference>
<dbReference type="GeneID" id="232816"/>
<dbReference type="KEGG" id="mmu:232816"/>
<dbReference type="UCSC" id="uc009eyx.1">
    <molecule id="Q8CJ78-1"/>
    <property type="organism name" value="mouse"/>
</dbReference>
<dbReference type="AGR" id="MGI:2665174"/>
<dbReference type="CTD" id="232816"/>
<dbReference type="MGI" id="MGI:2665174">
    <property type="gene designation" value="Zfp628"/>
</dbReference>
<dbReference type="VEuPathDB" id="HostDB:ENSMUSG00000074406"/>
<dbReference type="eggNOG" id="KOG1721">
    <property type="taxonomic scope" value="Eukaryota"/>
</dbReference>
<dbReference type="GeneTree" id="ENSGT00910000144307"/>
<dbReference type="HOGENOM" id="CLU_002678_15_0_1"/>
<dbReference type="InParanoid" id="Q8CJ78"/>
<dbReference type="OMA" id="ACAERPY"/>
<dbReference type="OrthoDB" id="9885925at2759"/>
<dbReference type="PhylomeDB" id="Q8CJ78"/>
<dbReference type="TreeFam" id="TF350841"/>
<dbReference type="BioGRID-ORCS" id="232816">
    <property type="hits" value="7 hits in 73 CRISPR screens"/>
</dbReference>
<dbReference type="PRO" id="PR:Q8CJ78"/>
<dbReference type="Proteomes" id="UP000000589">
    <property type="component" value="Chromosome 7"/>
</dbReference>
<dbReference type="RNAct" id="Q8CJ78">
    <property type="molecule type" value="protein"/>
</dbReference>
<dbReference type="Bgee" id="ENSMUSG00000074406">
    <property type="expression patterns" value="Expressed in forelimb stylopod and 87 other cell types or tissues"/>
</dbReference>
<dbReference type="GO" id="GO:0005634">
    <property type="term" value="C:nucleus"/>
    <property type="evidence" value="ECO:0000314"/>
    <property type="project" value="MGI"/>
</dbReference>
<dbReference type="GO" id="GO:0003677">
    <property type="term" value="F:DNA binding"/>
    <property type="evidence" value="ECO:0000314"/>
    <property type="project" value="MGI"/>
</dbReference>
<dbReference type="GO" id="GO:0003700">
    <property type="term" value="F:DNA-binding transcription factor activity"/>
    <property type="evidence" value="ECO:0000314"/>
    <property type="project" value="MGI"/>
</dbReference>
<dbReference type="GO" id="GO:0008270">
    <property type="term" value="F:zinc ion binding"/>
    <property type="evidence" value="ECO:0007669"/>
    <property type="project" value="UniProtKB-KW"/>
</dbReference>
<dbReference type="GO" id="GO:0006355">
    <property type="term" value="P:regulation of DNA-templated transcription"/>
    <property type="evidence" value="ECO:0000314"/>
    <property type="project" value="MGI"/>
</dbReference>
<dbReference type="GO" id="GO:0007283">
    <property type="term" value="P:spermatogenesis"/>
    <property type="evidence" value="ECO:0000315"/>
    <property type="project" value="UniProtKB"/>
</dbReference>
<dbReference type="FunFam" id="3.30.160.60:FF:000111">
    <property type="entry name" value="GLI family zinc finger 4"/>
    <property type="match status" value="1"/>
</dbReference>
<dbReference type="FunFam" id="3.30.160.60:FF:002716">
    <property type="entry name" value="Zinc finger protein 212"/>
    <property type="match status" value="2"/>
</dbReference>
<dbReference type="FunFam" id="3.30.160.60:FF:000016">
    <property type="entry name" value="zinc finger protein 37 homolog"/>
    <property type="match status" value="1"/>
</dbReference>
<dbReference type="FunFam" id="3.30.160.60:FF:000202">
    <property type="entry name" value="Zinc finger protein 574"/>
    <property type="match status" value="1"/>
</dbReference>
<dbReference type="FunFam" id="3.30.160.60:FF:000213">
    <property type="entry name" value="Zinc finger protein 624"/>
    <property type="match status" value="2"/>
</dbReference>
<dbReference type="FunFam" id="3.30.160.60:FF:001088">
    <property type="entry name" value="Zinc finger protein 628"/>
    <property type="match status" value="2"/>
</dbReference>
<dbReference type="FunFam" id="3.30.160.60:FF:001642">
    <property type="entry name" value="Zinc finger protein 628"/>
    <property type="match status" value="1"/>
</dbReference>
<dbReference type="FunFam" id="3.30.160.60:FF:001866">
    <property type="entry name" value="Zinc finger protein 628"/>
    <property type="match status" value="1"/>
</dbReference>
<dbReference type="FunFam" id="3.30.160.60:FF:000968">
    <property type="entry name" value="zinc finger protein 628"/>
    <property type="match status" value="2"/>
</dbReference>
<dbReference type="FunFam" id="3.30.160.60:FF:001824">
    <property type="entry name" value="zinc finger protein 628"/>
    <property type="match status" value="1"/>
</dbReference>
<dbReference type="FunFam" id="3.30.160.60:FF:000180">
    <property type="entry name" value="Zinc finger protein 689"/>
    <property type="match status" value="1"/>
</dbReference>
<dbReference type="Gene3D" id="3.30.160.60">
    <property type="entry name" value="Classic Zinc Finger"/>
    <property type="match status" value="15"/>
</dbReference>
<dbReference type="InterPro" id="IPR050758">
    <property type="entry name" value="Znf_C2H2-type"/>
</dbReference>
<dbReference type="InterPro" id="IPR036236">
    <property type="entry name" value="Znf_C2H2_sf"/>
</dbReference>
<dbReference type="InterPro" id="IPR013087">
    <property type="entry name" value="Znf_C2H2_type"/>
</dbReference>
<dbReference type="PANTHER" id="PTHR23234:SF10">
    <property type="entry name" value="RIKEN CDNA 6720489N17 GENE-RELATED"/>
    <property type="match status" value="1"/>
</dbReference>
<dbReference type="PANTHER" id="PTHR23234">
    <property type="entry name" value="ZNF44 PROTEIN"/>
    <property type="match status" value="1"/>
</dbReference>
<dbReference type="Pfam" id="PF00096">
    <property type="entry name" value="zf-C2H2"/>
    <property type="match status" value="12"/>
</dbReference>
<dbReference type="SMART" id="SM00355">
    <property type="entry name" value="ZnF_C2H2"/>
    <property type="match status" value="17"/>
</dbReference>
<dbReference type="SUPFAM" id="SSF57667">
    <property type="entry name" value="beta-beta-alpha zinc fingers"/>
    <property type="match status" value="9"/>
</dbReference>
<dbReference type="PROSITE" id="PS00028">
    <property type="entry name" value="ZINC_FINGER_C2H2_1"/>
    <property type="match status" value="16"/>
</dbReference>
<dbReference type="PROSITE" id="PS50157">
    <property type="entry name" value="ZINC_FINGER_C2H2_2"/>
    <property type="match status" value="16"/>
</dbReference>
<sequence>MAGSHVDMAPASTTEGTGEKPGPTAPAPTPAAQYECGECGKSFRWSSRLLHHQRTHTGERPYKCPDCPKAFKGSSALLYHQRGHTGERPYQCPDCPKAFKRSSLLQIHRSVHTGLRAFTCGQCGLAFKWSSHYQYHLRQHTGERPYPCPDCPKAFKNSSSLRRHRHVHTGERPYTCGICGKSFTQSTNLRQHQRVHTGERPFRCPLCPKTFTHSSNLLLHHRTHGPAPGPAPAPAPPGETSRADTKVLVSDAYLQPRSPPEPPAPPPQPPPVVPELFLAAAETTVELVYRCDGCEQGFSSEELLLEHQPCPGPPVATQSQDVPAELPQADSALPQPPPATPGPPNFACLPCGKSFRTVAGLSRHQHSHGAASGQAFRCGSCDGAFPQLASLLAHQQCHVEEAAAGRPPPQAEVAEVTCPQEPVAPATPAPPPPPPPAPVVSAERPYKCAECGKAFKGSSGLRYHLRDHTGERPYQCGECGKAFKRSSLLAIHQRVHTGLRAFTCGQCGLTFKWSSHYQYHLRLHSGERPYACTECGKAFRNTSCLRRHRHVHTGERPHSCSVCGKSFAQTSNLRQHQRVHTGERPFRCPLCPKTFTHSSNLLLHQRTHSAERPFACPICGRGFVMAAYLQRHLRTHTPATTTSGTTGSAVASQPPAPLAAAPTPLAAQDVHVLPNLQATLSLEVAGGTAQPTPPGPAAPSSQTFLLVQTAQGLQLIPSSVQSPTPPPPPPPPKVILLPPASAGGPGSGAARPGPRSVGKAGQGTGVVWFPGPGGLGLQGGANAGASGGGQSLIVLQNVGSGETGPQEVSGVQLQPAQEVATVQLQPAQEVTTVQLQPAQEVTTVQLQPLTGQVSNSNGGAGTTEAPNLLLVQSGATEELLTGPGPGEVGDSEAGAGVVQDVLFETLQTDEGLQSVLVLSGADGEQTRLCVQEVETLSPGLAEPAATGPSGQKLLIIRSAPATDLLENSSVAGGTTTLQLLAPSAPGPVSAPVGVPVAPPSQMVQVVPAVAGPGVMAPQNLPSIQIVQTLPAVQLVHTF</sequence>
<evidence type="ECO:0000250" key="1">
    <source>
        <dbReference type="UniProtKB" id="Q5EBL2"/>
    </source>
</evidence>
<evidence type="ECO:0000255" key="2">
    <source>
        <dbReference type="PROSITE-ProRule" id="PRU00042"/>
    </source>
</evidence>
<evidence type="ECO:0000256" key="3">
    <source>
        <dbReference type="SAM" id="MobiDB-lite"/>
    </source>
</evidence>
<evidence type="ECO:0000269" key="4">
    <source>
    </source>
</evidence>
<evidence type="ECO:0000269" key="5">
    <source>
    </source>
</evidence>
<evidence type="ECO:0000303" key="6">
    <source>
    </source>
</evidence>
<evidence type="ECO:0000303" key="7">
    <source>
    </source>
</evidence>
<evidence type="ECO:0000305" key="8"/>
<evidence type="ECO:0000312" key="9">
    <source>
        <dbReference type="MGI" id="MGI:2665174"/>
    </source>
</evidence>
<proteinExistence type="evidence at protein level"/>
<name>ZN628_MOUSE</name>
<gene>
    <name evidence="8" type="primary">Znf628</name>
    <name evidence="7" type="synonym">Zec</name>
    <name evidence="9" type="synonym">Zfp628</name>
</gene>
<organism>
    <name type="scientific">Mus musculus</name>
    <name type="common">Mouse</name>
    <dbReference type="NCBI Taxonomy" id="10090"/>
    <lineage>
        <taxon>Eukaryota</taxon>
        <taxon>Metazoa</taxon>
        <taxon>Chordata</taxon>
        <taxon>Craniata</taxon>
        <taxon>Vertebrata</taxon>
        <taxon>Euteleostomi</taxon>
        <taxon>Mammalia</taxon>
        <taxon>Eutheria</taxon>
        <taxon>Euarchontoglires</taxon>
        <taxon>Glires</taxon>
        <taxon>Rodentia</taxon>
        <taxon>Myomorpha</taxon>
        <taxon>Muroidea</taxon>
        <taxon>Muridae</taxon>
        <taxon>Murinae</taxon>
        <taxon>Mus</taxon>
        <taxon>Mus</taxon>
    </lineage>
</organism>
<comment type="function">
    <text evidence="4 5">Transcriptional activator (PubMed:15556296, PubMed:31932482). Binds DNA on GT-box consensus sequence 5'-TTGGTT-3' (PubMed:15556296). Plays a role in spermiogenesis (PubMed:31932482).</text>
</comment>
<comment type="subunit">
    <text evidence="5">Interacts with TAF4B.</text>
</comment>
<comment type="subcellular location">
    <subcellularLocation>
        <location evidence="4">Nucleus</location>
    </subcellularLocation>
</comment>
<comment type="alternative products">
    <event type="alternative splicing"/>
    <isoform>
        <id>Q8CJ78-1</id>
        <name>1</name>
        <sequence type="displayed"/>
    </isoform>
    <isoform>
        <id>Q8CJ78-2</id>
        <name>2</name>
        <sequence type="described" ref="VSP_019825 VSP_019826"/>
    </isoform>
</comment>
<comment type="tissue specificity">
    <text evidence="4 5">Expressed widely in testis, in both germline and somatic cells (PubMed:31932482). Seems to have particularly strong expression in meiotic spermatocytes, postmeiotic round spermatids and Sertoli cells (PubMed:31932482). Not detected in elongating spermatids or mature sperm (at protein level) (PubMed:31932482). Expressed in testis, ovary, spleen, lung, brain, liver and kidney (PubMed:15556296, PubMed:31932482). Expressed in D3 embryonic stem cells and F9 embryonal carcinoma cells (PubMed:15556296).</text>
</comment>
<comment type="developmental stage">
    <text evidence="4 5">During development, expression in the brain decreases gradually (PubMed:15556296). Shows increasing expression in testis from 16.5 dpc onwards, with maximum expression at postnatal day 21 (PubMed:31932482).</text>
</comment>
<comment type="disruption phenotype">
    <text evidence="5">Viable, with no gross morphological or behavioral phenotypes. Males are infertile with complete absence of mature sperm. Spermiogenesis arrests at the round spermatid stage, accompanied by extensive apoptosis within the seminiferous tubules. Expression of spermiogenesis-associated genes TNP1, TNP2, PRM1 and PRM2 in testis is significantly reduced.</text>
</comment>
<comment type="sequence caution" evidence="8">
    <conflict type="erroneous initiation">
        <sequence resource="EMBL-CDS" id="AAH56945"/>
    </conflict>
    <text>Truncated N-terminus.</text>
</comment>
<comment type="sequence caution" evidence="8">
    <conflict type="erroneous initiation">
        <sequence resource="EMBL-CDS" id="AAH62973"/>
    </conflict>
    <text>Truncated N-terminus.</text>
</comment>
<comment type="sequence caution" evidence="8">
    <conflict type="erroneous initiation">
        <sequence resource="EMBL-CDS" id="AAN63612"/>
    </conflict>
    <text>Truncated N-terminus.</text>
</comment>
<feature type="chain" id="PRO_0000246071" description="Zinc finger protein 628">
    <location>
        <begin position="1"/>
        <end position="1038"/>
    </location>
</feature>
<feature type="repeat" description="1" evidence="7">
    <location>
        <begin position="811"/>
        <end position="821"/>
    </location>
</feature>
<feature type="repeat" description="2" evidence="7">
    <location>
        <begin position="822"/>
        <end position="832"/>
    </location>
</feature>
<feature type="repeat" description="3" evidence="7">
    <location>
        <begin position="833"/>
        <end position="843"/>
    </location>
</feature>
<feature type="repeat" description="4" evidence="7">
    <location>
        <begin position="844"/>
        <end position="854"/>
    </location>
</feature>
<feature type="zinc finger region" description="C2H2-type 1" evidence="2">
    <location>
        <begin position="34"/>
        <end position="56"/>
    </location>
</feature>
<feature type="zinc finger region" description="C2H2-type 2" evidence="2">
    <location>
        <begin position="62"/>
        <end position="84"/>
    </location>
</feature>
<feature type="zinc finger region" description="C2H2-type 3" evidence="2">
    <location>
        <begin position="90"/>
        <end position="112"/>
    </location>
</feature>
<feature type="zinc finger region" description="C2H2-type 4" evidence="2">
    <location>
        <begin position="118"/>
        <end position="140"/>
    </location>
</feature>
<feature type="zinc finger region" description="C2H2-type 5" evidence="2">
    <location>
        <begin position="146"/>
        <end position="168"/>
    </location>
</feature>
<feature type="zinc finger region" description="C2H2-type 6" evidence="2">
    <location>
        <begin position="174"/>
        <end position="196"/>
    </location>
</feature>
<feature type="zinc finger region" description="C2H2-type 7" evidence="2">
    <location>
        <begin position="202"/>
        <end position="224"/>
    </location>
</feature>
<feature type="zinc finger region" description="C2H2-type 8" evidence="2">
    <location>
        <begin position="346"/>
        <end position="368"/>
    </location>
</feature>
<feature type="zinc finger region" description="C2H2-type 9" evidence="2">
    <location>
        <begin position="376"/>
        <end position="398"/>
    </location>
</feature>
<feature type="zinc finger region" description="C2H2-type 10" evidence="2">
    <location>
        <begin position="446"/>
        <end position="468"/>
    </location>
</feature>
<feature type="zinc finger region" description="C2H2-type 11" evidence="2">
    <location>
        <begin position="474"/>
        <end position="496"/>
    </location>
</feature>
<feature type="zinc finger region" description="C2H2-type 12" evidence="2">
    <location>
        <begin position="502"/>
        <end position="524"/>
    </location>
</feature>
<feature type="zinc finger region" description="C2H2-type 13" evidence="2">
    <location>
        <begin position="530"/>
        <end position="552"/>
    </location>
</feature>
<feature type="zinc finger region" description="C2H2-type 14" evidence="2">
    <location>
        <begin position="558"/>
        <end position="580"/>
    </location>
</feature>
<feature type="zinc finger region" description="C2H2-type 15" evidence="2">
    <location>
        <begin position="586"/>
        <end position="608"/>
    </location>
</feature>
<feature type="zinc finger region" description="C2H2-type 16" evidence="2">
    <location>
        <begin position="614"/>
        <end position="636"/>
    </location>
</feature>
<feature type="region of interest" description="Disordered" evidence="3">
    <location>
        <begin position="1"/>
        <end position="31"/>
    </location>
</feature>
<feature type="region of interest" description="Disordered" evidence="3">
    <location>
        <begin position="220"/>
        <end position="242"/>
    </location>
</feature>
<feature type="region of interest" description="Disordered" evidence="3">
    <location>
        <begin position="254"/>
        <end position="273"/>
    </location>
</feature>
<feature type="region of interest" description="Disordered" evidence="3">
    <location>
        <begin position="637"/>
        <end position="661"/>
    </location>
</feature>
<feature type="region of interest" description="Disordered" evidence="3">
    <location>
        <begin position="717"/>
        <end position="763"/>
    </location>
</feature>
<feature type="region of interest" description="4 X 11 AA tandem repeats of VQLQP-[AL]-[QT]-[EG]-[VQ]-[ATV]-[ST]" evidence="7">
    <location>
        <begin position="811"/>
        <end position="854"/>
    </location>
</feature>
<feature type="region of interest" description="Interaction with TAF4B" evidence="5">
    <location>
        <begin position="922"/>
        <end position="1038"/>
    </location>
</feature>
<feature type="compositionally biased region" description="Low complexity" evidence="3">
    <location>
        <begin position="13"/>
        <end position="22"/>
    </location>
</feature>
<feature type="compositionally biased region" description="Pro residues" evidence="3">
    <location>
        <begin position="227"/>
        <end position="237"/>
    </location>
</feature>
<feature type="compositionally biased region" description="Pro residues" evidence="3">
    <location>
        <begin position="257"/>
        <end position="273"/>
    </location>
</feature>
<feature type="compositionally biased region" description="Pro residues" evidence="3">
    <location>
        <begin position="723"/>
        <end position="733"/>
    </location>
</feature>
<feature type="compositionally biased region" description="Low complexity" evidence="3">
    <location>
        <begin position="734"/>
        <end position="756"/>
    </location>
</feature>
<feature type="modified residue" description="Phosphothreonine" evidence="1">
    <location>
        <position position="197"/>
    </location>
</feature>
<feature type="modified residue" description="Phosphothreonine" evidence="1">
    <location>
        <position position="581"/>
    </location>
</feature>
<feature type="splice variant" id="VSP_019825" description="In isoform 2." evidence="6">
    <original>VVP</original>
    <variation>ALL</variation>
    <location>
        <begin position="272"/>
        <end position="274"/>
    </location>
</feature>
<feature type="splice variant" id="VSP_019826" description="In isoform 2." evidence="6">
    <location>
        <begin position="275"/>
        <end position="1038"/>
    </location>
</feature>